<accession>Q1GCQ5</accession>
<protein>
    <recommendedName>
        <fullName evidence="1">tRNA N6-adenosine threonylcarbamoyltransferase</fullName>
        <ecNumber evidence="1">2.3.1.234</ecNumber>
    </recommendedName>
    <alternativeName>
        <fullName evidence="1">N6-L-threonylcarbamoyladenine synthase</fullName>
        <shortName evidence="1">t(6)A synthase</shortName>
    </alternativeName>
    <alternativeName>
        <fullName evidence="1">t(6)A37 threonylcarbamoyladenosine biosynthesis protein TsaD</fullName>
    </alternativeName>
    <alternativeName>
        <fullName evidence="1">tRNA threonylcarbamoyladenosine biosynthesis protein TsaD</fullName>
    </alternativeName>
</protein>
<feature type="chain" id="PRO_0000303540" description="tRNA N6-adenosine threonylcarbamoyltransferase">
    <location>
        <begin position="1"/>
        <end position="365"/>
    </location>
</feature>
<feature type="region of interest" description="Disordered" evidence="2">
    <location>
        <begin position="341"/>
        <end position="365"/>
    </location>
</feature>
<feature type="binding site" evidence="1">
    <location>
        <position position="119"/>
    </location>
    <ligand>
        <name>Fe cation</name>
        <dbReference type="ChEBI" id="CHEBI:24875"/>
    </ligand>
</feature>
<feature type="binding site" evidence="1">
    <location>
        <position position="123"/>
    </location>
    <ligand>
        <name>Fe cation</name>
        <dbReference type="ChEBI" id="CHEBI:24875"/>
    </ligand>
</feature>
<feature type="binding site" evidence="1">
    <location>
        <begin position="141"/>
        <end position="145"/>
    </location>
    <ligand>
        <name>substrate</name>
    </ligand>
</feature>
<feature type="binding site" evidence="1">
    <location>
        <position position="174"/>
    </location>
    <ligand>
        <name>substrate</name>
    </ligand>
</feature>
<feature type="binding site" evidence="1">
    <location>
        <position position="187"/>
    </location>
    <ligand>
        <name>substrate</name>
    </ligand>
</feature>
<feature type="binding site" evidence="1">
    <location>
        <position position="289"/>
    </location>
    <ligand>
        <name>substrate</name>
    </ligand>
</feature>
<feature type="binding site" evidence="1">
    <location>
        <position position="317"/>
    </location>
    <ligand>
        <name>Fe cation</name>
        <dbReference type="ChEBI" id="CHEBI:24875"/>
    </ligand>
</feature>
<reference key="1">
    <citation type="submission" date="2006-05" db="EMBL/GenBank/DDBJ databases">
        <title>Complete sequence of chromosome of Silicibacter sp. TM1040.</title>
        <authorList>
            <consortium name="US DOE Joint Genome Institute"/>
            <person name="Copeland A."/>
            <person name="Lucas S."/>
            <person name="Lapidus A."/>
            <person name="Barry K."/>
            <person name="Detter J.C."/>
            <person name="Glavina del Rio T."/>
            <person name="Hammon N."/>
            <person name="Israni S."/>
            <person name="Dalin E."/>
            <person name="Tice H."/>
            <person name="Pitluck S."/>
            <person name="Brettin T."/>
            <person name="Bruce D."/>
            <person name="Han C."/>
            <person name="Tapia R."/>
            <person name="Goodwin L."/>
            <person name="Thompson L.S."/>
            <person name="Gilna P."/>
            <person name="Schmutz J."/>
            <person name="Larimer F."/>
            <person name="Land M."/>
            <person name="Hauser L."/>
            <person name="Kyrpides N."/>
            <person name="Kim E."/>
            <person name="Belas R."/>
            <person name="Moran M.A."/>
            <person name="Buchan A."/>
            <person name="Gonzalez J.M."/>
            <person name="Schell M.A."/>
            <person name="Sun F."/>
            <person name="Richardson P."/>
        </authorList>
    </citation>
    <scope>NUCLEOTIDE SEQUENCE [LARGE SCALE GENOMIC DNA]</scope>
    <source>
        <strain>TM1040</strain>
    </source>
</reference>
<sequence length="365" mass="38361">MTQTLTLLGLESSCDDTAAAVVRQTTGAKAEILSSIVFGQTELHSAYGGVVPEIAARAHAEKLDSCVRDALAEAGLTLGDLDAIAVTAGPGLIGGVMSGVMCAKGISAATGLPLIGVNHLAGHALTPRLTDDITYPYLMLLVSGGHCQYLIARGPETFSRLGGTIDDAPGEAFDKTARLLGLPQPGGPSVQAEAEHGDPERFRFPRPLLDRPDCNLSFSGLKTALMRMRDQIIAEKGGLTRQDRADLCAGFQAAIVDTLVEKTRRALRLYLEDKPQHPTLAVAGGVAANTEIRNGLMALCFELETDFLAPPLALCTDNAAMIAYAGLERYKTGARDGMSLSARPRWPLDKTSPALIGSGKKGAKA</sequence>
<dbReference type="EC" id="2.3.1.234" evidence="1"/>
<dbReference type="EMBL" id="CP000377">
    <property type="protein sequence ID" value="ABF65561.1"/>
    <property type="molecule type" value="Genomic_DNA"/>
</dbReference>
<dbReference type="RefSeq" id="WP_011540143.1">
    <property type="nucleotide sequence ID" value="NC_008044.1"/>
</dbReference>
<dbReference type="SMR" id="Q1GCQ5"/>
<dbReference type="STRING" id="292414.TM1040_2829"/>
<dbReference type="KEGG" id="sit:TM1040_2829"/>
<dbReference type="eggNOG" id="COG0533">
    <property type="taxonomic scope" value="Bacteria"/>
</dbReference>
<dbReference type="HOGENOM" id="CLU_023208_0_2_5"/>
<dbReference type="OrthoDB" id="9806197at2"/>
<dbReference type="Proteomes" id="UP000000636">
    <property type="component" value="Chromosome"/>
</dbReference>
<dbReference type="GO" id="GO:0005737">
    <property type="term" value="C:cytoplasm"/>
    <property type="evidence" value="ECO:0007669"/>
    <property type="project" value="UniProtKB-SubCell"/>
</dbReference>
<dbReference type="GO" id="GO:0005506">
    <property type="term" value="F:iron ion binding"/>
    <property type="evidence" value="ECO:0007669"/>
    <property type="project" value="UniProtKB-UniRule"/>
</dbReference>
<dbReference type="GO" id="GO:0061711">
    <property type="term" value="F:N(6)-L-threonylcarbamoyladenine synthase activity"/>
    <property type="evidence" value="ECO:0007669"/>
    <property type="project" value="UniProtKB-EC"/>
</dbReference>
<dbReference type="GO" id="GO:0002949">
    <property type="term" value="P:tRNA threonylcarbamoyladenosine modification"/>
    <property type="evidence" value="ECO:0007669"/>
    <property type="project" value="UniProtKB-UniRule"/>
</dbReference>
<dbReference type="CDD" id="cd24133">
    <property type="entry name" value="ASKHA_NBD_TsaD_bac"/>
    <property type="match status" value="1"/>
</dbReference>
<dbReference type="FunFam" id="3.30.420.40:FF:000012">
    <property type="entry name" value="tRNA N6-adenosine threonylcarbamoyltransferase"/>
    <property type="match status" value="1"/>
</dbReference>
<dbReference type="FunFam" id="3.30.420.40:FF:000040">
    <property type="entry name" value="tRNA N6-adenosine threonylcarbamoyltransferase"/>
    <property type="match status" value="1"/>
</dbReference>
<dbReference type="Gene3D" id="3.30.420.40">
    <property type="match status" value="2"/>
</dbReference>
<dbReference type="HAMAP" id="MF_01445">
    <property type="entry name" value="TsaD"/>
    <property type="match status" value="1"/>
</dbReference>
<dbReference type="InterPro" id="IPR043129">
    <property type="entry name" value="ATPase_NBD"/>
</dbReference>
<dbReference type="InterPro" id="IPR000905">
    <property type="entry name" value="Gcp-like_dom"/>
</dbReference>
<dbReference type="InterPro" id="IPR017861">
    <property type="entry name" value="KAE1/TsaD"/>
</dbReference>
<dbReference type="InterPro" id="IPR022450">
    <property type="entry name" value="TsaD"/>
</dbReference>
<dbReference type="NCBIfam" id="TIGR00329">
    <property type="entry name" value="gcp_kae1"/>
    <property type="match status" value="1"/>
</dbReference>
<dbReference type="NCBIfam" id="TIGR03723">
    <property type="entry name" value="T6A_TsaD_YgjD"/>
    <property type="match status" value="1"/>
</dbReference>
<dbReference type="PANTHER" id="PTHR11735">
    <property type="entry name" value="TRNA N6-ADENOSINE THREONYLCARBAMOYLTRANSFERASE"/>
    <property type="match status" value="1"/>
</dbReference>
<dbReference type="PANTHER" id="PTHR11735:SF6">
    <property type="entry name" value="TRNA N6-ADENOSINE THREONYLCARBAMOYLTRANSFERASE, MITOCHONDRIAL"/>
    <property type="match status" value="1"/>
</dbReference>
<dbReference type="Pfam" id="PF00814">
    <property type="entry name" value="TsaD"/>
    <property type="match status" value="1"/>
</dbReference>
<dbReference type="PRINTS" id="PR00789">
    <property type="entry name" value="OSIALOPTASE"/>
</dbReference>
<dbReference type="SUPFAM" id="SSF53067">
    <property type="entry name" value="Actin-like ATPase domain"/>
    <property type="match status" value="2"/>
</dbReference>
<proteinExistence type="inferred from homology"/>
<name>TSAD_RUEST</name>
<comment type="function">
    <text evidence="1">Required for the formation of a threonylcarbamoyl group on adenosine at position 37 (t(6)A37) in tRNAs that read codons beginning with adenine. Is involved in the transfer of the threonylcarbamoyl moiety of threonylcarbamoyl-AMP (TC-AMP) to the N6 group of A37, together with TsaE and TsaB. TsaD likely plays a direct catalytic role in this reaction.</text>
</comment>
<comment type="catalytic activity">
    <reaction evidence="1">
        <text>L-threonylcarbamoyladenylate + adenosine(37) in tRNA = N(6)-L-threonylcarbamoyladenosine(37) in tRNA + AMP + H(+)</text>
        <dbReference type="Rhea" id="RHEA:37059"/>
        <dbReference type="Rhea" id="RHEA-COMP:10162"/>
        <dbReference type="Rhea" id="RHEA-COMP:10163"/>
        <dbReference type="ChEBI" id="CHEBI:15378"/>
        <dbReference type="ChEBI" id="CHEBI:73682"/>
        <dbReference type="ChEBI" id="CHEBI:74411"/>
        <dbReference type="ChEBI" id="CHEBI:74418"/>
        <dbReference type="ChEBI" id="CHEBI:456215"/>
        <dbReference type="EC" id="2.3.1.234"/>
    </reaction>
</comment>
<comment type="cofactor">
    <cofactor evidence="1">
        <name>Fe(2+)</name>
        <dbReference type="ChEBI" id="CHEBI:29033"/>
    </cofactor>
    <text evidence="1">Binds 1 Fe(2+) ion per subunit.</text>
</comment>
<comment type="subcellular location">
    <subcellularLocation>
        <location evidence="1">Cytoplasm</location>
    </subcellularLocation>
</comment>
<comment type="similarity">
    <text evidence="1">Belongs to the KAE1 / TsaD family.</text>
</comment>
<evidence type="ECO:0000255" key="1">
    <source>
        <dbReference type="HAMAP-Rule" id="MF_01445"/>
    </source>
</evidence>
<evidence type="ECO:0000256" key="2">
    <source>
        <dbReference type="SAM" id="MobiDB-lite"/>
    </source>
</evidence>
<gene>
    <name evidence="1" type="primary">tsaD</name>
    <name type="synonym">gcp</name>
    <name type="ordered locus">TM1040_2829</name>
</gene>
<organism>
    <name type="scientific">Ruegeria sp. (strain TM1040)</name>
    <name type="common">Silicibacter sp.</name>
    <dbReference type="NCBI Taxonomy" id="292414"/>
    <lineage>
        <taxon>Bacteria</taxon>
        <taxon>Pseudomonadati</taxon>
        <taxon>Pseudomonadota</taxon>
        <taxon>Alphaproteobacteria</taxon>
        <taxon>Rhodobacterales</taxon>
        <taxon>Roseobacteraceae</taxon>
        <taxon>Ruegeria</taxon>
    </lineage>
</organism>
<keyword id="KW-0012">Acyltransferase</keyword>
<keyword id="KW-0963">Cytoplasm</keyword>
<keyword id="KW-0408">Iron</keyword>
<keyword id="KW-0479">Metal-binding</keyword>
<keyword id="KW-1185">Reference proteome</keyword>
<keyword id="KW-0808">Transferase</keyword>
<keyword id="KW-0819">tRNA processing</keyword>